<dbReference type="EMBL" id="DQ141178">
    <property type="protein sequence ID" value="AAZ83777.1"/>
    <property type="molecule type" value="mRNA"/>
</dbReference>
<dbReference type="SMR" id="Q3YED5"/>
<dbReference type="ConoServer" id="1131">
    <property type="toxin name" value="MaIr332 precursor"/>
</dbReference>
<dbReference type="GO" id="GO:0005576">
    <property type="term" value="C:extracellular region"/>
    <property type="evidence" value="ECO:0007669"/>
    <property type="project" value="UniProtKB-SubCell"/>
</dbReference>
<dbReference type="GO" id="GO:0008200">
    <property type="term" value="F:ion channel inhibitor activity"/>
    <property type="evidence" value="ECO:0007669"/>
    <property type="project" value="InterPro"/>
</dbReference>
<dbReference type="GO" id="GO:0090729">
    <property type="term" value="F:toxin activity"/>
    <property type="evidence" value="ECO:0007669"/>
    <property type="project" value="UniProtKB-KW"/>
</dbReference>
<dbReference type="InterPro" id="IPR004214">
    <property type="entry name" value="Conotoxin"/>
</dbReference>
<dbReference type="Pfam" id="PF02950">
    <property type="entry name" value="Conotoxin"/>
    <property type="match status" value="1"/>
</dbReference>
<organism>
    <name type="scientific">Conus marmoreus</name>
    <name type="common">Marble cone</name>
    <dbReference type="NCBI Taxonomy" id="42752"/>
    <lineage>
        <taxon>Eukaryota</taxon>
        <taxon>Metazoa</taxon>
        <taxon>Spiralia</taxon>
        <taxon>Lophotrochozoa</taxon>
        <taxon>Mollusca</taxon>
        <taxon>Gastropoda</taxon>
        <taxon>Caenogastropoda</taxon>
        <taxon>Neogastropoda</taxon>
        <taxon>Conoidea</taxon>
        <taxon>Conidae</taxon>
        <taxon>Conus</taxon>
    </lineage>
</organism>
<name>O1632_CONMR</name>
<feature type="signal peptide" evidence="2">
    <location>
        <begin position="1"/>
        <end position="21"/>
    </location>
</feature>
<feature type="propeptide" id="PRO_0000315506" evidence="3">
    <location>
        <begin position="22"/>
        <end position="48"/>
    </location>
</feature>
<feature type="peptide" id="PRO_0000315507" description="Conotoxin MaIr332">
    <location>
        <begin position="51"/>
        <end position="76"/>
    </location>
</feature>
<feature type="disulfide bond" evidence="1">
    <location>
        <begin position="51"/>
        <end position="66"/>
    </location>
</feature>
<feature type="disulfide bond" evidence="1">
    <location>
        <begin position="58"/>
        <end position="70"/>
    </location>
</feature>
<feature type="disulfide bond" evidence="1">
    <location>
        <begin position="65"/>
        <end position="75"/>
    </location>
</feature>
<proteinExistence type="evidence at transcript level"/>
<accession>Q3YED5</accession>
<protein>
    <recommendedName>
        <fullName>Conotoxin MaIr332</fullName>
    </recommendedName>
</protein>
<keyword id="KW-0165">Cleavage on pair of basic residues</keyword>
<keyword id="KW-1015">Disulfide bond</keyword>
<keyword id="KW-0960">Knottin</keyword>
<keyword id="KW-0528">Neurotoxin</keyword>
<keyword id="KW-0964">Secreted</keyword>
<keyword id="KW-0732">Signal</keyword>
<keyword id="KW-0800">Toxin</keyword>
<evidence type="ECO:0000250" key="1"/>
<evidence type="ECO:0000255" key="2"/>
<evidence type="ECO:0000305" key="3"/>
<comment type="subcellular location">
    <subcellularLocation>
        <location evidence="1">Secreted</location>
    </subcellularLocation>
</comment>
<comment type="tissue specificity">
    <text>Expressed by the venom duct.</text>
</comment>
<comment type="domain">
    <text evidence="1">The presence of a 'disulfide through disulfide knot' structurally defines this protein as a knottin.</text>
</comment>
<comment type="domain">
    <text>The cysteine framework is VI/VII (C-C-CC-C-C).</text>
</comment>
<comment type="similarity">
    <text evidence="3">Belongs to the conotoxin O1 superfamily.</text>
</comment>
<reference key="1">
    <citation type="journal article" date="2006" name="Peptides">
        <title>Sequence diversity of O-superfamily conopeptides from Conus marmoreus native to Hainan.</title>
        <authorList>
            <person name="Luo S."/>
            <person name="Zhangsun D."/>
            <person name="Lin Q."/>
            <person name="Xie L."/>
            <person name="Wu Y."/>
            <person name="Zhu X."/>
        </authorList>
    </citation>
    <scope>NUCLEOTIDE SEQUENCE [MRNA]</scope>
    <source>
        <tissue>Venom duct</tissue>
    </source>
</reference>
<sequence>MKLTCVIVAVLFLTAWTFVTADDSGNGLENLFSKAHHEMKNPKDSKLNKRCLDGGEICGILFPSCCSGWCIVLVCA</sequence>